<reference key="1">
    <citation type="journal article" date="2001" name="Genome Res.">
        <title>The complete genome sequence of the lactic acid bacterium Lactococcus lactis ssp. lactis IL1403.</title>
        <authorList>
            <person name="Bolotin A."/>
            <person name="Wincker P."/>
            <person name="Mauger S."/>
            <person name="Jaillon O."/>
            <person name="Malarme K."/>
            <person name="Weissenbach J."/>
            <person name="Ehrlich S.D."/>
            <person name="Sorokin A."/>
        </authorList>
    </citation>
    <scope>NUCLEOTIDE SEQUENCE [LARGE SCALE GENOMIC DNA]</scope>
    <source>
        <strain>IL1403</strain>
    </source>
</reference>
<gene>
    <name evidence="1" type="primary">polC</name>
    <name type="ordered locus">LL2124</name>
    <name type="ORF">L0278</name>
</gene>
<organism>
    <name type="scientific">Lactococcus lactis subsp. lactis (strain IL1403)</name>
    <name type="common">Streptococcus lactis</name>
    <dbReference type="NCBI Taxonomy" id="272623"/>
    <lineage>
        <taxon>Bacteria</taxon>
        <taxon>Bacillati</taxon>
        <taxon>Bacillota</taxon>
        <taxon>Bacilli</taxon>
        <taxon>Lactobacillales</taxon>
        <taxon>Streptococcaceae</taxon>
        <taxon>Lactococcus</taxon>
    </lineage>
</organism>
<dbReference type="EC" id="2.7.7.7" evidence="1"/>
<dbReference type="EMBL" id="AE005176">
    <property type="protein sequence ID" value="AAK06222.1"/>
    <property type="status" value="ALT_INIT"/>
    <property type="molecule type" value="Genomic_DNA"/>
</dbReference>
<dbReference type="PIR" id="D86890">
    <property type="entry name" value="D86890"/>
</dbReference>
<dbReference type="RefSeq" id="NP_268281.1">
    <property type="nucleotide sequence ID" value="NC_002662.1"/>
</dbReference>
<dbReference type="RefSeq" id="WP_031296849.1">
    <property type="nucleotide sequence ID" value="NC_002662.1"/>
</dbReference>
<dbReference type="SMR" id="Q9CDT7"/>
<dbReference type="PaxDb" id="272623-L0278"/>
<dbReference type="EnsemblBacteria" id="AAK06222">
    <property type="protein sequence ID" value="AAK06222"/>
    <property type="gene ID" value="L0278"/>
</dbReference>
<dbReference type="KEGG" id="lla:L0278"/>
<dbReference type="PATRIC" id="fig|272623.7.peg.2283"/>
<dbReference type="eggNOG" id="COG2176">
    <property type="taxonomic scope" value="Bacteria"/>
</dbReference>
<dbReference type="HOGENOM" id="CLU_003297_2_0_9"/>
<dbReference type="OrthoDB" id="9804290at2"/>
<dbReference type="Proteomes" id="UP000002196">
    <property type="component" value="Chromosome"/>
</dbReference>
<dbReference type="GO" id="GO:0005737">
    <property type="term" value="C:cytoplasm"/>
    <property type="evidence" value="ECO:0007669"/>
    <property type="project" value="UniProtKB-SubCell"/>
</dbReference>
<dbReference type="GO" id="GO:0008408">
    <property type="term" value="F:3'-5' exonuclease activity"/>
    <property type="evidence" value="ECO:0007669"/>
    <property type="project" value="UniProtKB-UniRule"/>
</dbReference>
<dbReference type="GO" id="GO:0003677">
    <property type="term" value="F:DNA binding"/>
    <property type="evidence" value="ECO:0007669"/>
    <property type="project" value="UniProtKB-UniRule"/>
</dbReference>
<dbReference type="GO" id="GO:0003887">
    <property type="term" value="F:DNA-directed DNA polymerase activity"/>
    <property type="evidence" value="ECO:0007669"/>
    <property type="project" value="UniProtKB-UniRule"/>
</dbReference>
<dbReference type="GO" id="GO:0006261">
    <property type="term" value="P:DNA-templated DNA replication"/>
    <property type="evidence" value="ECO:0007669"/>
    <property type="project" value="UniProtKB-UniRule"/>
</dbReference>
<dbReference type="CDD" id="cd06127">
    <property type="entry name" value="DEDDh"/>
    <property type="match status" value="1"/>
</dbReference>
<dbReference type="CDD" id="cd07435">
    <property type="entry name" value="PHP_PolIIIA_POLC"/>
    <property type="match status" value="1"/>
</dbReference>
<dbReference type="CDD" id="cd04484">
    <property type="entry name" value="polC_OBF"/>
    <property type="match status" value="2"/>
</dbReference>
<dbReference type="FunFam" id="3.30.420.10:FF:000045">
    <property type="entry name" value="3'-5' exonuclease DinG"/>
    <property type="match status" value="1"/>
</dbReference>
<dbReference type="Gene3D" id="1.10.150.870">
    <property type="match status" value="1"/>
</dbReference>
<dbReference type="Gene3D" id="3.30.1900.20">
    <property type="match status" value="1"/>
</dbReference>
<dbReference type="Gene3D" id="6.10.140.1510">
    <property type="match status" value="1"/>
</dbReference>
<dbReference type="Gene3D" id="3.20.20.140">
    <property type="entry name" value="Metal-dependent hydrolases"/>
    <property type="match status" value="2"/>
</dbReference>
<dbReference type="Gene3D" id="2.40.50.140">
    <property type="entry name" value="Nucleic acid-binding proteins"/>
    <property type="match status" value="2"/>
</dbReference>
<dbReference type="Gene3D" id="1.10.150.700">
    <property type="entry name" value="PolC, middle finger domain"/>
    <property type="match status" value="1"/>
</dbReference>
<dbReference type="Gene3D" id="3.30.420.10">
    <property type="entry name" value="Ribonuclease H-like superfamily/Ribonuclease H"/>
    <property type="match status" value="1"/>
</dbReference>
<dbReference type="HAMAP" id="MF_00356">
    <property type="entry name" value="DNApol_PolC"/>
    <property type="match status" value="1"/>
</dbReference>
<dbReference type="InterPro" id="IPR011708">
    <property type="entry name" value="DNA_pol3_alpha_NTPase_dom"/>
</dbReference>
<dbReference type="InterPro" id="IPR040982">
    <property type="entry name" value="DNA_pol3_finger"/>
</dbReference>
<dbReference type="InterPro" id="IPR024754">
    <property type="entry name" value="DNA_PolC-like_N_II"/>
</dbReference>
<dbReference type="InterPro" id="IPR028112">
    <property type="entry name" value="DNA_PolC-type_N_I"/>
</dbReference>
<dbReference type="InterPro" id="IPR004805">
    <property type="entry name" value="DnaE2/DnaE/PolC"/>
</dbReference>
<dbReference type="InterPro" id="IPR029460">
    <property type="entry name" value="DNAPol_HHH"/>
</dbReference>
<dbReference type="InterPro" id="IPR006054">
    <property type="entry name" value="DnaQ"/>
</dbReference>
<dbReference type="InterPro" id="IPR013520">
    <property type="entry name" value="Exonuclease_RNaseT/DNA_pol3"/>
</dbReference>
<dbReference type="InterPro" id="IPR012340">
    <property type="entry name" value="NA-bd_OB-fold"/>
</dbReference>
<dbReference type="InterPro" id="IPR004013">
    <property type="entry name" value="PHP_dom"/>
</dbReference>
<dbReference type="InterPro" id="IPR003141">
    <property type="entry name" value="Pol/His_phosphatase_N"/>
</dbReference>
<dbReference type="InterPro" id="IPR006308">
    <property type="entry name" value="Pol_III_a_PolC-type_gram_pos"/>
</dbReference>
<dbReference type="InterPro" id="IPR044923">
    <property type="entry name" value="PolC_middle_finger_sf"/>
</dbReference>
<dbReference type="InterPro" id="IPR012337">
    <property type="entry name" value="RNaseH-like_sf"/>
</dbReference>
<dbReference type="InterPro" id="IPR036397">
    <property type="entry name" value="RNaseH_sf"/>
</dbReference>
<dbReference type="NCBIfam" id="TIGR00573">
    <property type="entry name" value="dnaq"/>
    <property type="match status" value="1"/>
</dbReference>
<dbReference type="NCBIfam" id="TIGR01405">
    <property type="entry name" value="polC_Gram_pos"/>
    <property type="match status" value="1"/>
</dbReference>
<dbReference type="NCBIfam" id="NF001688">
    <property type="entry name" value="PRK00448.1"/>
    <property type="match status" value="1"/>
</dbReference>
<dbReference type="PANTHER" id="PTHR32294:SF5">
    <property type="entry name" value="DNA POLYMERASE III POLC-TYPE"/>
    <property type="match status" value="1"/>
</dbReference>
<dbReference type="PANTHER" id="PTHR32294">
    <property type="entry name" value="DNA POLYMERASE III SUBUNIT ALPHA"/>
    <property type="match status" value="1"/>
</dbReference>
<dbReference type="Pfam" id="PF14480">
    <property type="entry name" value="DNA_pol3_a_NI"/>
    <property type="match status" value="1"/>
</dbReference>
<dbReference type="Pfam" id="PF11490">
    <property type="entry name" value="DNA_pol3_a_NII"/>
    <property type="match status" value="1"/>
</dbReference>
<dbReference type="Pfam" id="PF07733">
    <property type="entry name" value="DNA_pol3_alpha"/>
    <property type="match status" value="2"/>
</dbReference>
<dbReference type="Pfam" id="PF17657">
    <property type="entry name" value="DNA_pol3_finger"/>
    <property type="match status" value="1"/>
</dbReference>
<dbReference type="Pfam" id="PF14579">
    <property type="entry name" value="HHH_6"/>
    <property type="match status" value="1"/>
</dbReference>
<dbReference type="Pfam" id="PF02811">
    <property type="entry name" value="PHP"/>
    <property type="match status" value="1"/>
</dbReference>
<dbReference type="Pfam" id="PF00929">
    <property type="entry name" value="RNase_T"/>
    <property type="match status" value="1"/>
</dbReference>
<dbReference type="SMART" id="SM00479">
    <property type="entry name" value="EXOIII"/>
    <property type="match status" value="1"/>
</dbReference>
<dbReference type="SMART" id="SM00481">
    <property type="entry name" value="POLIIIAc"/>
    <property type="match status" value="1"/>
</dbReference>
<dbReference type="SUPFAM" id="SSF50249">
    <property type="entry name" value="Nucleic acid-binding proteins"/>
    <property type="match status" value="1"/>
</dbReference>
<dbReference type="SUPFAM" id="SSF53098">
    <property type="entry name" value="Ribonuclease H-like"/>
    <property type="match status" value="1"/>
</dbReference>
<proteinExistence type="inferred from homology"/>
<feature type="chain" id="PRO_0000204577" description="DNA polymerase III PolC-type">
    <location>
        <begin position="1"/>
        <end position="1638"/>
    </location>
</feature>
<feature type="domain" description="Exonuclease">
    <location>
        <begin position="596"/>
        <end position="752"/>
    </location>
</feature>
<feature type="region of interest" description="Disordered" evidence="2">
    <location>
        <begin position="193"/>
        <end position="212"/>
    </location>
</feature>
<feature type="compositionally biased region" description="Basic and acidic residues" evidence="2">
    <location>
        <begin position="194"/>
        <end position="212"/>
    </location>
</feature>
<protein>
    <recommendedName>
        <fullName evidence="1">DNA polymerase III PolC-type</fullName>
        <shortName evidence="1">PolIII</shortName>
        <ecNumber evidence="1">2.7.7.7</ecNumber>
    </recommendedName>
</protein>
<sequence>MENLFEKLMEQIKMPPNLRRSSQFEHADIENVEVHTASKLWHFQLIFDEILPIDTYKLLTELTETAFSTIARTEISVSSRNQNIDEQNLNDYYQYALTLPELCDSAFSSIFKKYHLEKEEEKIHLMVEDNPQMDFFVEKYFPILEEKFKSFGFGEVRITPLVDQELTETQAAAHAEKVAARLAAQTAEQAQISEIKKQRSEERESKNTREAKPEFVETALSDGIFFGRKISGQSPITSMSFIAGEGFGVIFEGLVFEAAHREFTGKESGKVNHILELKMADETSTFMISKWGRKDEEIAQFDQIVSTVKAMNEKIIADRTDGEDNFTDSLSDALWLRVQGNIEHDKYKDDLVLTANAVVEIKPKPTIDRVALQIKAVKSDKIQLGREIKNNEPVTPMRSVSEFSTNGPVVFEGYVFKGELREIKSRKTGNISYLLEFEMTDYTSSFYVQKWLRGEEEIQLAKQIKAGLWCRVRGNVQRDNFKNDLVLQLTDLIEIPTQNVREDKSDEKRVEFHAHTNMSQMDAIPSASSLVAQAAKWGHKAIAITDHGGLQSFPEAHSAGKKNGVKIIYGVEANLVEDKIPIVYNETDVDMYESTYVVFDVETTGLSAVHNDLIQIAATKMHKGNPIDEFDEFINPGYRLSEFTTELTGITDDHVKNAKPLYEVLTKFQKFCEGTILVAHNATFDVGFMNMNYSRNGLPIITQPVVDTLEFARNLYPEMKRFGLGQLTKKFQIGLEHHHMANFDAEATGRLLFVFLEELRTRNTGWTSLLELNDKLVSEDSYKKVRPKHVTLYAKTQEGLKNLFKIVSFGNVKYYAGLPRVPRSVLEANREGLLVGSACEIGEVFDAAINKTFEETLEIAKFYDFIEVFPPALYRSLVVGGSFKSEKELEQTLKDLIKIGKTLGKPVLATGNLHYLNPEDAIYREIIVRSLGLGAEINWTQGHGEHAKPLPLPEAHFRTTDEMLEAFSFLDEKTAREIVIDNTQKMADEFDVLTPVRDDLYTPKMVFDGGETSEERIVRLTYEKAHEWYGNPLPDIIDARLEKELRSILGNGFSVVYIISQELVKRSNDRGYIVGSRGSVGSSLVATMIGITEVNPLAPHYRCPECQYFECYDDGSFGSGYDMPDKNCPKCDHKLIKDGHDIPFETFLGFKGDKVPDIDLNFSGDDQPLAHLDVRDIFGEDYAFRAGTIGTVAEKTAFGFVKGYERDYDQFYGNAEIDRLAAGSTGVKRTTGQHPGGIIVIPNYMDVYDFSPVQFPADDVNAEWQTTHFDFHAIHDNILKLDILGHDDPTMIRKLQSLSGIVPQDIPMDDPGVMKLFTGTESLGLTEEQLGVKLGTLGIPEMGTFTSMNMIAEAKPKNFADLLQISGLSHGTDVWSGNAQDLIRSGIADLSSVIGCRDDIMVYLIHKGLENGLAFTIMERVRKGMWNKIPAEEREKYVEAMREHDVPEWYIESCSKIKYMFPKAHAAAYIMMALRVAYFKVHHPILYYCAWFSIRATAFDIGVMGAGLEAVKAKMKEIKDKGFDATNVETNLYTTLELCNEMLERGFTFGKIDLYRSEATEFVIDGDTLIPPFVTMDGLGENVAKQIVAARAEGEFLSKMELRKRGGVSQTIIENMTNMGVLEGMPDDNQLSLFDDFF</sequence>
<name>DPO3_LACLA</name>
<accession>Q9CDT7</accession>
<keyword id="KW-0963">Cytoplasm</keyword>
<keyword id="KW-0235">DNA replication</keyword>
<keyword id="KW-0239">DNA-directed DNA polymerase</keyword>
<keyword id="KW-0269">Exonuclease</keyword>
<keyword id="KW-0378">Hydrolase</keyword>
<keyword id="KW-0540">Nuclease</keyword>
<keyword id="KW-0548">Nucleotidyltransferase</keyword>
<keyword id="KW-1185">Reference proteome</keyword>
<keyword id="KW-0808">Transferase</keyword>
<comment type="function">
    <text evidence="1">Required for replicative DNA synthesis. This DNA polymerase also exhibits 3' to 5' exonuclease activity.</text>
</comment>
<comment type="catalytic activity">
    <reaction evidence="1">
        <text>DNA(n) + a 2'-deoxyribonucleoside 5'-triphosphate = DNA(n+1) + diphosphate</text>
        <dbReference type="Rhea" id="RHEA:22508"/>
        <dbReference type="Rhea" id="RHEA-COMP:17339"/>
        <dbReference type="Rhea" id="RHEA-COMP:17340"/>
        <dbReference type="ChEBI" id="CHEBI:33019"/>
        <dbReference type="ChEBI" id="CHEBI:61560"/>
        <dbReference type="ChEBI" id="CHEBI:173112"/>
        <dbReference type="EC" id="2.7.7.7"/>
    </reaction>
</comment>
<comment type="subcellular location">
    <subcellularLocation>
        <location evidence="1">Cytoplasm</location>
    </subcellularLocation>
</comment>
<comment type="similarity">
    <text evidence="1">Belongs to the DNA polymerase type-C family. PolC subfamily.</text>
</comment>
<comment type="sequence caution" evidence="3">
    <conflict type="erroneous initiation">
        <sequence resource="EMBL-CDS" id="AAK06222"/>
    </conflict>
</comment>
<evidence type="ECO:0000255" key="1">
    <source>
        <dbReference type="HAMAP-Rule" id="MF_00356"/>
    </source>
</evidence>
<evidence type="ECO:0000256" key="2">
    <source>
        <dbReference type="SAM" id="MobiDB-lite"/>
    </source>
</evidence>
<evidence type="ECO:0000305" key="3"/>